<accession>A6VL61</accession>
<comment type="function">
    <text evidence="1">F(1)F(0) ATP synthase produces ATP from ADP in the presence of a proton or sodium gradient. F-type ATPases consist of two structural domains, F(1) containing the extramembraneous catalytic core and F(0) containing the membrane proton channel, linked together by a central stalk and a peripheral stalk. During catalysis, ATP synthesis in the catalytic domain of F(1) is coupled via a rotary mechanism of the central stalk subunits to proton translocation.</text>
</comment>
<comment type="function">
    <text evidence="1">Component of the F(0) channel, it forms part of the peripheral stalk, linking F(1) to F(0).</text>
</comment>
<comment type="subunit">
    <text evidence="1">F-type ATPases have 2 components, F(1) - the catalytic core - and F(0) - the membrane proton channel. F(1) has five subunits: alpha(3), beta(3), gamma(1), delta(1), epsilon(1). F(0) has three main subunits: a(1), b(2) and c(10-14). The alpha and beta chains form an alternating ring which encloses part of the gamma chain. F(1) is attached to F(0) by a central stalk formed by the gamma and epsilon chains, while a peripheral stalk is formed by the delta and b chains.</text>
</comment>
<comment type="subcellular location">
    <subcellularLocation>
        <location evidence="1">Cell inner membrane</location>
        <topology evidence="1">Single-pass membrane protein</topology>
    </subcellularLocation>
</comment>
<comment type="similarity">
    <text evidence="1">Belongs to the ATPase B chain family.</text>
</comment>
<protein>
    <recommendedName>
        <fullName evidence="1">ATP synthase subunit b</fullName>
    </recommendedName>
    <alternativeName>
        <fullName evidence="1">ATP synthase F(0) sector subunit b</fullName>
    </alternativeName>
    <alternativeName>
        <fullName evidence="1">ATPase subunit I</fullName>
    </alternativeName>
    <alternativeName>
        <fullName evidence="1">F-type ATPase subunit b</fullName>
        <shortName evidence="1">F-ATPase subunit b</shortName>
    </alternativeName>
</protein>
<keyword id="KW-0066">ATP synthesis</keyword>
<keyword id="KW-0997">Cell inner membrane</keyword>
<keyword id="KW-1003">Cell membrane</keyword>
<keyword id="KW-0138">CF(0)</keyword>
<keyword id="KW-0375">Hydrogen ion transport</keyword>
<keyword id="KW-0406">Ion transport</keyword>
<keyword id="KW-0472">Membrane</keyword>
<keyword id="KW-1185">Reference proteome</keyword>
<keyword id="KW-0812">Transmembrane</keyword>
<keyword id="KW-1133">Transmembrane helix</keyword>
<keyword id="KW-0813">Transport</keyword>
<feature type="chain" id="PRO_0000368298" description="ATP synthase subunit b">
    <location>
        <begin position="1"/>
        <end position="156"/>
    </location>
</feature>
<feature type="transmembrane region" description="Helical" evidence="1">
    <location>
        <begin position="7"/>
        <end position="29"/>
    </location>
</feature>
<proteinExistence type="inferred from homology"/>
<gene>
    <name evidence="1" type="primary">atpF</name>
    <name type="ordered locus">Asuc_0330</name>
</gene>
<name>ATPF_ACTSZ</name>
<organism>
    <name type="scientific">Actinobacillus succinogenes (strain ATCC 55618 / DSM 22257 / CCUG 43843 / 130Z)</name>
    <dbReference type="NCBI Taxonomy" id="339671"/>
    <lineage>
        <taxon>Bacteria</taxon>
        <taxon>Pseudomonadati</taxon>
        <taxon>Pseudomonadota</taxon>
        <taxon>Gammaproteobacteria</taxon>
        <taxon>Pasteurellales</taxon>
        <taxon>Pasteurellaceae</taxon>
        <taxon>Actinobacillus</taxon>
    </lineage>
</organism>
<reference key="1">
    <citation type="journal article" date="2010" name="BMC Genomics">
        <title>A genomic perspective on the potential of Actinobacillus succinogenes for industrial succinate production.</title>
        <authorList>
            <person name="McKinlay J.B."/>
            <person name="Laivenieks M."/>
            <person name="Schindler B.D."/>
            <person name="McKinlay A.A."/>
            <person name="Siddaramappa S."/>
            <person name="Challacombe J.F."/>
            <person name="Lowry S.R."/>
            <person name="Clum A."/>
            <person name="Lapidus A.L."/>
            <person name="Burkhart K.B."/>
            <person name="Harkins V."/>
            <person name="Vieille C."/>
        </authorList>
    </citation>
    <scope>NUCLEOTIDE SEQUENCE [LARGE SCALE GENOMIC DNA]</scope>
    <source>
        <strain>ATCC 55618 / DSM 22257 / CCUG 43843 / 130Z</strain>
    </source>
</reference>
<dbReference type="EMBL" id="CP000746">
    <property type="protein sequence ID" value="ABR73708.1"/>
    <property type="molecule type" value="Genomic_DNA"/>
</dbReference>
<dbReference type="RefSeq" id="WP_011978983.1">
    <property type="nucleotide sequence ID" value="NC_009655.1"/>
</dbReference>
<dbReference type="SMR" id="A6VL61"/>
<dbReference type="STRING" id="339671.Asuc_0330"/>
<dbReference type="KEGG" id="asu:Asuc_0330"/>
<dbReference type="eggNOG" id="COG0711">
    <property type="taxonomic scope" value="Bacteria"/>
</dbReference>
<dbReference type="HOGENOM" id="CLU_079215_4_5_6"/>
<dbReference type="OrthoDB" id="9788020at2"/>
<dbReference type="Proteomes" id="UP000001114">
    <property type="component" value="Chromosome"/>
</dbReference>
<dbReference type="GO" id="GO:0005886">
    <property type="term" value="C:plasma membrane"/>
    <property type="evidence" value="ECO:0007669"/>
    <property type="project" value="UniProtKB-SubCell"/>
</dbReference>
<dbReference type="GO" id="GO:0045259">
    <property type="term" value="C:proton-transporting ATP synthase complex"/>
    <property type="evidence" value="ECO:0007669"/>
    <property type="project" value="UniProtKB-KW"/>
</dbReference>
<dbReference type="GO" id="GO:0046933">
    <property type="term" value="F:proton-transporting ATP synthase activity, rotational mechanism"/>
    <property type="evidence" value="ECO:0007669"/>
    <property type="project" value="UniProtKB-UniRule"/>
</dbReference>
<dbReference type="GO" id="GO:0046961">
    <property type="term" value="F:proton-transporting ATPase activity, rotational mechanism"/>
    <property type="evidence" value="ECO:0007669"/>
    <property type="project" value="TreeGrafter"/>
</dbReference>
<dbReference type="CDD" id="cd06503">
    <property type="entry name" value="ATP-synt_Fo_b"/>
    <property type="match status" value="1"/>
</dbReference>
<dbReference type="FunFam" id="1.20.5.620:FF:000001">
    <property type="entry name" value="ATP synthase subunit b"/>
    <property type="match status" value="1"/>
</dbReference>
<dbReference type="Gene3D" id="1.20.5.620">
    <property type="entry name" value="F1F0 ATP synthase subunit B, membrane domain"/>
    <property type="match status" value="1"/>
</dbReference>
<dbReference type="HAMAP" id="MF_01398">
    <property type="entry name" value="ATP_synth_b_bprime"/>
    <property type="match status" value="1"/>
</dbReference>
<dbReference type="InterPro" id="IPR028987">
    <property type="entry name" value="ATP_synth_B-like_membr_sf"/>
</dbReference>
<dbReference type="InterPro" id="IPR002146">
    <property type="entry name" value="ATP_synth_b/b'su_bac/chlpt"/>
</dbReference>
<dbReference type="InterPro" id="IPR005864">
    <property type="entry name" value="ATP_synth_F0_bsu_bac"/>
</dbReference>
<dbReference type="InterPro" id="IPR050059">
    <property type="entry name" value="ATP_synthase_B_chain"/>
</dbReference>
<dbReference type="NCBIfam" id="TIGR01144">
    <property type="entry name" value="ATP_synt_b"/>
    <property type="match status" value="1"/>
</dbReference>
<dbReference type="NCBIfam" id="NF004411">
    <property type="entry name" value="PRK05759.1-2"/>
    <property type="match status" value="1"/>
</dbReference>
<dbReference type="NCBIfam" id="NF004413">
    <property type="entry name" value="PRK05759.1-4"/>
    <property type="match status" value="1"/>
</dbReference>
<dbReference type="PANTHER" id="PTHR33445:SF1">
    <property type="entry name" value="ATP SYNTHASE SUBUNIT B"/>
    <property type="match status" value="1"/>
</dbReference>
<dbReference type="PANTHER" id="PTHR33445">
    <property type="entry name" value="ATP SYNTHASE SUBUNIT B', CHLOROPLASTIC"/>
    <property type="match status" value="1"/>
</dbReference>
<dbReference type="Pfam" id="PF00430">
    <property type="entry name" value="ATP-synt_B"/>
    <property type="match status" value="1"/>
</dbReference>
<dbReference type="SUPFAM" id="SSF81573">
    <property type="entry name" value="F1F0 ATP synthase subunit B, membrane domain"/>
    <property type="match status" value="1"/>
</dbReference>
<sequence length="156" mass="17262">MNLNATLIGQLIAFALFTWFCVKFVWPPIIKAIEERQSSIANALASAEAARKEQADTKTLAEEEITKAKIQAQEIIDSANKRRNEVLDEVKAEAETLKAKIIEQGYAEVEAERKRVQEELRVKVASLAIAGAEKIVGRTVDEAANNDIIDKLVAEL</sequence>
<evidence type="ECO:0000255" key="1">
    <source>
        <dbReference type="HAMAP-Rule" id="MF_01398"/>
    </source>
</evidence>